<keyword id="KW-0066">ATP synthesis</keyword>
<keyword id="KW-0139">CF(1)</keyword>
<keyword id="KW-0375">Hydrogen ion transport</keyword>
<keyword id="KW-0406">Ion transport</keyword>
<keyword id="KW-0472">Membrane</keyword>
<keyword id="KW-0793">Thylakoid</keyword>
<keyword id="KW-0813">Transport</keyword>
<reference key="1">
    <citation type="journal article" date="2014" name="Stand. Genomic Sci.">
        <title>Complete genome sequence of Anabaena variabilis ATCC 29413.</title>
        <authorList>
            <person name="Thiel T."/>
            <person name="Pratte B.S."/>
            <person name="Zhong J."/>
            <person name="Goodwin L."/>
            <person name="Copeland A."/>
            <person name="Lucas S."/>
            <person name="Han C."/>
            <person name="Pitluck S."/>
            <person name="Land M.L."/>
            <person name="Kyrpides N.C."/>
            <person name="Woyke T."/>
        </authorList>
    </citation>
    <scope>NUCLEOTIDE SEQUENCE [LARGE SCALE GENOMIC DNA]</scope>
    <source>
        <strain>ATCC 29413 / PCC 7937</strain>
    </source>
</reference>
<feature type="chain" id="PRO_0000265782" description="ATP synthase epsilon chain">
    <location>
        <begin position="1"/>
        <end position="137"/>
    </location>
</feature>
<dbReference type="EMBL" id="CP000117">
    <property type="protein sequence ID" value="ABA21915.1"/>
    <property type="molecule type" value="Genomic_DNA"/>
</dbReference>
<dbReference type="SMR" id="Q3MAS1"/>
<dbReference type="STRING" id="240292.Ava_2297"/>
<dbReference type="KEGG" id="ava:Ava_2297"/>
<dbReference type="eggNOG" id="COG0355">
    <property type="taxonomic scope" value="Bacteria"/>
</dbReference>
<dbReference type="HOGENOM" id="CLU_084338_1_2_3"/>
<dbReference type="Proteomes" id="UP000002533">
    <property type="component" value="Chromosome"/>
</dbReference>
<dbReference type="GO" id="GO:0031676">
    <property type="term" value="C:plasma membrane-derived thylakoid membrane"/>
    <property type="evidence" value="ECO:0007669"/>
    <property type="project" value="UniProtKB-SubCell"/>
</dbReference>
<dbReference type="GO" id="GO:0045259">
    <property type="term" value="C:proton-transporting ATP synthase complex"/>
    <property type="evidence" value="ECO:0007669"/>
    <property type="project" value="UniProtKB-KW"/>
</dbReference>
<dbReference type="GO" id="GO:0005524">
    <property type="term" value="F:ATP binding"/>
    <property type="evidence" value="ECO:0007669"/>
    <property type="project" value="UniProtKB-UniRule"/>
</dbReference>
<dbReference type="GO" id="GO:0046933">
    <property type="term" value="F:proton-transporting ATP synthase activity, rotational mechanism"/>
    <property type="evidence" value="ECO:0007669"/>
    <property type="project" value="UniProtKB-UniRule"/>
</dbReference>
<dbReference type="CDD" id="cd12152">
    <property type="entry name" value="F1-ATPase_delta"/>
    <property type="match status" value="1"/>
</dbReference>
<dbReference type="Gene3D" id="2.60.15.10">
    <property type="entry name" value="F0F1 ATP synthase delta/epsilon subunit, N-terminal"/>
    <property type="match status" value="1"/>
</dbReference>
<dbReference type="Gene3D" id="1.10.287.540">
    <property type="entry name" value="Helix hairpin bin"/>
    <property type="match status" value="1"/>
</dbReference>
<dbReference type="HAMAP" id="MF_00530">
    <property type="entry name" value="ATP_synth_epsil_bac"/>
    <property type="match status" value="1"/>
</dbReference>
<dbReference type="InterPro" id="IPR001469">
    <property type="entry name" value="ATP_synth_F1_dsu/esu"/>
</dbReference>
<dbReference type="InterPro" id="IPR020546">
    <property type="entry name" value="ATP_synth_F1_dsu/esu_N"/>
</dbReference>
<dbReference type="InterPro" id="IPR020547">
    <property type="entry name" value="ATP_synth_F1_esu_C"/>
</dbReference>
<dbReference type="InterPro" id="IPR036771">
    <property type="entry name" value="ATPsynth_dsu/esu_N"/>
</dbReference>
<dbReference type="NCBIfam" id="TIGR01216">
    <property type="entry name" value="ATP_synt_epsi"/>
    <property type="match status" value="1"/>
</dbReference>
<dbReference type="NCBIfam" id="NF009977">
    <property type="entry name" value="PRK13442.1"/>
    <property type="match status" value="1"/>
</dbReference>
<dbReference type="PANTHER" id="PTHR13822">
    <property type="entry name" value="ATP SYNTHASE DELTA/EPSILON CHAIN"/>
    <property type="match status" value="1"/>
</dbReference>
<dbReference type="PANTHER" id="PTHR13822:SF10">
    <property type="entry name" value="ATP SYNTHASE EPSILON CHAIN, CHLOROPLASTIC"/>
    <property type="match status" value="1"/>
</dbReference>
<dbReference type="Pfam" id="PF00401">
    <property type="entry name" value="ATP-synt_DE"/>
    <property type="match status" value="1"/>
</dbReference>
<dbReference type="Pfam" id="PF02823">
    <property type="entry name" value="ATP-synt_DE_N"/>
    <property type="match status" value="1"/>
</dbReference>
<dbReference type="SUPFAM" id="SSF51344">
    <property type="entry name" value="Epsilon subunit of F1F0-ATP synthase N-terminal domain"/>
    <property type="match status" value="1"/>
</dbReference>
<proteinExistence type="inferred from homology"/>
<comment type="function">
    <text evidence="1">Produces ATP from ADP in the presence of a proton gradient across the membrane.</text>
</comment>
<comment type="subunit">
    <text>F-type ATPases have 2 components, CF(1) - the catalytic core - and CF(0) - the membrane proton channel. CF(1) has five subunits: alpha(3), beta(3), gamma(1), delta(1), epsilon(1). CF(0) has three main subunits: a, b and c.</text>
</comment>
<comment type="subcellular location">
    <subcellularLocation>
        <location evidence="1">Cellular thylakoid membrane</location>
        <topology evidence="1">Peripheral membrane protein</topology>
    </subcellularLocation>
</comment>
<comment type="similarity">
    <text evidence="1">Belongs to the ATPase epsilon chain family.</text>
</comment>
<name>ATPE_TRIV2</name>
<protein>
    <recommendedName>
        <fullName evidence="1">ATP synthase epsilon chain</fullName>
    </recommendedName>
    <alternativeName>
        <fullName evidence="1">ATP synthase F1 sector epsilon subunit</fullName>
    </alternativeName>
    <alternativeName>
        <fullName evidence="1">F-ATPase epsilon subunit</fullName>
    </alternativeName>
</protein>
<evidence type="ECO:0000255" key="1">
    <source>
        <dbReference type="HAMAP-Rule" id="MF_00530"/>
    </source>
</evidence>
<gene>
    <name evidence="1" type="primary">atpC</name>
    <name type="ordered locus">Ava_2297</name>
</gene>
<organism>
    <name type="scientific">Trichormus variabilis (strain ATCC 29413 / PCC 7937)</name>
    <name type="common">Anabaena variabilis</name>
    <dbReference type="NCBI Taxonomy" id="240292"/>
    <lineage>
        <taxon>Bacteria</taxon>
        <taxon>Bacillati</taxon>
        <taxon>Cyanobacteriota</taxon>
        <taxon>Cyanophyceae</taxon>
        <taxon>Nostocales</taxon>
        <taxon>Nostocaceae</taxon>
        <taxon>Trichormus</taxon>
    </lineage>
</organism>
<sequence>MTLTVRVISPDKTVWDAEADEVILPSTTGQLGILSGHAPLLTALDTGVLRVRTSKSQNWQAIALLGGFAEVEEDEVTILVNGGERGDTINLEEARTAYSQAQTKLNQVPAGDRQAQIQANQAFKRARARFQAAGGLV</sequence>
<accession>Q3MAS1</accession>